<reference key="1">
    <citation type="submission" date="2003-06" db="EMBL/GenBank/DDBJ databases">
        <title>The complete genome sequence of Haemophilus ducreyi.</title>
        <authorList>
            <person name="Munson R.S. Jr."/>
            <person name="Ray W.C."/>
            <person name="Mahairas G."/>
            <person name="Sabo P."/>
            <person name="Mungur R."/>
            <person name="Johnson L."/>
            <person name="Nguyen D."/>
            <person name="Wang J."/>
            <person name="Forst C."/>
            <person name="Hood L."/>
        </authorList>
    </citation>
    <scope>NUCLEOTIDE SEQUENCE [LARGE SCALE GENOMIC DNA]</scope>
    <source>
        <strain>35000HP / ATCC 700724</strain>
    </source>
</reference>
<name>PTH_HAEDU</name>
<dbReference type="EC" id="3.1.1.29" evidence="1"/>
<dbReference type="EMBL" id="AE017143">
    <property type="protein sequence ID" value="AAP95875.1"/>
    <property type="status" value="ALT_INIT"/>
    <property type="molecule type" value="Genomic_DNA"/>
</dbReference>
<dbReference type="RefSeq" id="WP_041603668.1">
    <property type="nucleotide sequence ID" value="NC_002940.2"/>
</dbReference>
<dbReference type="SMR" id="Q7VMI1"/>
<dbReference type="STRING" id="233412.HD_0996"/>
<dbReference type="KEGG" id="hdu:HD_0996"/>
<dbReference type="eggNOG" id="COG0193">
    <property type="taxonomic scope" value="Bacteria"/>
</dbReference>
<dbReference type="HOGENOM" id="CLU_062456_3_1_6"/>
<dbReference type="OrthoDB" id="9800507at2"/>
<dbReference type="Proteomes" id="UP000001022">
    <property type="component" value="Chromosome"/>
</dbReference>
<dbReference type="GO" id="GO:0005737">
    <property type="term" value="C:cytoplasm"/>
    <property type="evidence" value="ECO:0007669"/>
    <property type="project" value="UniProtKB-SubCell"/>
</dbReference>
<dbReference type="GO" id="GO:0004045">
    <property type="term" value="F:peptidyl-tRNA hydrolase activity"/>
    <property type="evidence" value="ECO:0007669"/>
    <property type="project" value="UniProtKB-UniRule"/>
</dbReference>
<dbReference type="GO" id="GO:0000049">
    <property type="term" value="F:tRNA binding"/>
    <property type="evidence" value="ECO:0007669"/>
    <property type="project" value="UniProtKB-UniRule"/>
</dbReference>
<dbReference type="GO" id="GO:0006515">
    <property type="term" value="P:protein quality control for misfolded or incompletely synthesized proteins"/>
    <property type="evidence" value="ECO:0007669"/>
    <property type="project" value="UniProtKB-UniRule"/>
</dbReference>
<dbReference type="GO" id="GO:0072344">
    <property type="term" value="P:rescue of stalled ribosome"/>
    <property type="evidence" value="ECO:0007669"/>
    <property type="project" value="UniProtKB-UniRule"/>
</dbReference>
<dbReference type="CDD" id="cd00462">
    <property type="entry name" value="PTH"/>
    <property type="match status" value="1"/>
</dbReference>
<dbReference type="FunFam" id="3.40.50.1470:FF:000001">
    <property type="entry name" value="Peptidyl-tRNA hydrolase"/>
    <property type="match status" value="1"/>
</dbReference>
<dbReference type="Gene3D" id="3.40.50.1470">
    <property type="entry name" value="Peptidyl-tRNA hydrolase"/>
    <property type="match status" value="1"/>
</dbReference>
<dbReference type="HAMAP" id="MF_00083">
    <property type="entry name" value="Pept_tRNA_hydro_bact"/>
    <property type="match status" value="1"/>
</dbReference>
<dbReference type="InterPro" id="IPR001328">
    <property type="entry name" value="Pept_tRNA_hydro"/>
</dbReference>
<dbReference type="InterPro" id="IPR018171">
    <property type="entry name" value="Pept_tRNA_hydro_CS"/>
</dbReference>
<dbReference type="InterPro" id="IPR036416">
    <property type="entry name" value="Pept_tRNA_hydro_sf"/>
</dbReference>
<dbReference type="NCBIfam" id="TIGR00447">
    <property type="entry name" value="pth"/>
    <property type="match status" value="1"/>
</dbReference>
<dbReference type="PANTHER" id="PTHR17224">
    <property type="entry name" value="PEPTIDYL-TRNA HYDROLASE"/>
    <property type="match status" value="1"/>
</dbReference>
<dbReference type="PANTHER" id="PTHR17224:SF1">
    <property type="entry name" value="PEPTIDYL-TRNA HYDROLASE"/>
    <property type="match status" value="1"/>
</dbReference>
<dbReference type="Pfam" id="PF01195">
    <property type="entry name" value="Pept_tRNA_hydro"/>
    <property type="match status" value="1"/>
</dbReference>
<dbReference type="SUPFAM" id="SSF53178">
    <property type="entry name" value="Peptidyl-tRNA hydrolase-like"/>
    <property type="match status" value="1"/>
</dbReference>
<dbReference type="PROSITE" id="PS01195">
    <property type="entry name" value="PEPT_TRNA_HYDROL_1"/>
    <property type="match status" value="1"/>
</dbReference>
<dbReference type="PROSITE" id="PS01196">
    <property type="entry name" value="PEPT_TRNA_HYDROL_2"/>
    <property type="match status" value="1"/>
</dbReference>
<accession>Q7VMI1</accession>
<proteinExistence type="inferred from homology"/>
<gene>
    <name evidence="1" type="primary">pth</name>
    <name type="ordered locus">HD_0996</name>
</gene>
<sequence length="194" mass="21088">MSQIKLIVGLANPGAKYEGTRHNAGEWLVNELARMYNTSLKDEAKYFGKTAKINTVNGDVWLLIPTTFMNLSGKAVGALAHFFRIKAEEILIAHDELDLPPGVAKLKQGGGHGGHNGLKDIISALGNNNNFYRIRLGIGHPGHKDQVAGYVLSKPAPQDQQKINAVIDEASRCLEILFKDGVTSATNRLNSFKA</sequence>
<evidence type="ECO:0000255" key="1">
    <source>
        <dbReference type="HAMAP-Rule" id="MF_00083"/>
    </source>
</evidence>
<evidence type="ECO:0000305" key="2"/>
<protein>
    <recommendedName>
        <fullName evidence="1">Peptidyl-tRNA hydrolase</fullName>
        <shortName evidence="1">Pth</shortName>
        <ecNumber evidence="1">3.1.1.29</ecNumber>
    </recommendedName>
</protein>
<feature type="chain" id="PRO_0000187746" description="Peptidyl-tRNA hydrolase">
    <location>
        <begin position="1"/>
        <end position="194"/>
    </location>
</feature>
<feature type="active site" description="Proton acceptor" evidence="1">
    <location>
        <position position="22"/>
    </location>
</feature>
<feature type="binding site" evidence="1">
    <location>
        <position position="17"/>
    </location>
    <ligand>
        <name>tRNA</name>
        <dbReference type="ChEBI" id="CHEBI:17843"/>
    </ligand>
</feature>
<feature type="binding site" evidence="1">
    <location>
        <position position="68"/>
    </location>
    <ligand>
        <name>tRNA</name>
        <dbReference type="ChEBI" id="CHEBI:17843"/>
    </ligand>
</feature>
<feature type="binding site" evidence="1">
    <location>
        <position position="70"/>
    </location>
    <ligand>
        <name>tRNA</name>
        <dbReference type="ChEBI" id="CHEBI:17843"/>
    </ligand>
</feature>
<feature type="binding site" evidence="1">
    <location>
        <position position="116"/>
    </location>
    <ligand>
        <name>tRNA</name>
        <dbReference type="ChEBI" id="CHEBI:17843"/>
    </ligand>
</feature>
<feature type="site" description="Discriminates between blocked and unblocked aminoacyl-tRNA" evidence="1">
    <location>
        <position position="12"/>
    </location>
</feature>
<feature type="site" description="Stabilizes the basic form of H active site to accept a proton" evidence="1">
    <location>
        <position position="95"/>
    </location>
</feature>
<comment type="function">
    <text evidence="1">Hydrolyzes ribosome-free peptidyl-tRNAs (with 1 or more amino acids incorporated), which drop off the ribosome during protein synthesis, or as a result of ribosome stalling.</text>
</comment>
<comment type="function">
    <text evidence="1">Catalyzes the release of premature peptidyl moieties from peptidyl-tRNA molecules trapped in stalled 50S ribosomal subunits, and thus maintains levels of free tRNAs and 50S ribosomes.</text>
</comment>
<comment type="catalytic activity">
    <reaction evidence="1">
        <text>an N-acyl-L-alpha-aminoacyl-tRNA + H2O = an N-acyl-L-amino acid + a tRNA + H(+)</text>
        <dbReference type="Rhea" id="RHEA:54448"/>
        <dbReference type="Rhea" id="RHEA-COMP:10123"/>
        <dbReference type="Rhea" id="RHEA-COMP:13883"/>
        <dbReference type="ChEBI" id="CHEBI:15377"/>
        <dbReference type="ChEBI" id="CHEBI:15378"/>
        <dbReference type="ChEBI" id="CHEBI:59874"/>
        <dbReference type="ChEBI" id="CHEBI:78442"/>
        <dbReference type="ChEBI" id="CHEBI:138191"/>
        <dbReference type="EC" id="3.1.1.29"/>
    </reaction>
</comment>
<comment type="subunit">
    <text evidence="1">Monomer.</text>
</comment>
<comment type="subcellular location">
    <subcellularLocation>
        <location evidence="1">Cytoplasm</location>
    </subcellularLocation>
</comment>
<comment type="similarity">
    <text evidence="1">Belongs to the PTH family.</text>
</comment>
<comment type="sequence caution" evidence="2">
    <conflict type="erroneous initiation">
        <sequence resource="EMBL-CDS" id="AAP95875"/>
    </conflict>
    <text>Extended N-terminus.</text>
</comment>
<organism>
    <name type="scientific">Haemophilus ducreyi (strain 35000HP / ATCC 700724)</name>
    <dbReference type="NCBI Taxonomy" id="233412"/>
    <lineage>
        <taxon>Bacteria</taxon>
        <taxon>Pseudomonadati</taxon>
        <taxon>Pseudomonadota</taxon>
        <taxon>Gammaproteobacteria</taxon>
        <taxon>Pasteurellales</taxon>
        <taxon>Pasteurellaceae</taxon>
        <taxon>Haemophilus</taxon>
    </lineage>
</organism>
<keyword id="KW-0963">Cytoplasm</keyword>
<keyword id="KW-0378">Hydrolase</keyword>
<keyword id="KW-1185">Reference proteome</keyword>
<keyword id="KW-0694">RNA-binding</keyword>
<keyword id="KW-0820">tRNA-binding</keyword>